<organism>
    <name type="scientific">Manduca sexta</name>
    <name type="common">Tobacco hawkmoth</name>
    <name type="synonym">Tobacco hornworm</name>
    <dbReference type="NCBI Taxonomy" id="7130"/>
    <lineage>
        <taxon>Eukaryota</taxon>
        <taxon>Metazoa</taxon>
        <taxon>Ecdysozoa</taxon>
        <taxon>Arthropoda</taxon>
        <taxon>Hexapoda</taxon>
        <taxon>Insecta</taxon>
        <taxon>Pterygota</taxon>
        <taxon>Neoptera</taxon>
        <taxon>Endopterygota</taxon>
        <taxon>Lepidoptera</taxon>
        <taxon>Glossata</taxon>
        <taxon>Ditrysia</taxon>
        <taxon>Bombycoidea</taxon>
        <taxon>Sphingidae</taxon>
        <taxon>Sphinginae</taxon>
        <taxon>Sphingini</taxon>
        <taxon>Manduca</taxon>
    </lineage>
</organism>
<comment type="function">
    <text>Binds fatty acids in a 1:1 molar ratio.</text>
</comment>
<comment type="subunit">
    <text>Monomer.</text>
</comment>
<comment type="subcellular location">
    <subcellularLocation>
        <location>Cytoplasm</location>
    </subcellularLocation>
</comment>
<comment type="tissue specificity">
    <text>Midgut.</text>
</comment>
<comment type="domain">
    <text evidence="1">Forms a beta-barrel structure that accommodates hydrophobic ligands in its interior.</text>
</comment>
<comment type="similarity">
    <text evidence="3">Belongs to the calycin superfamily. Fatty-acid binding protein (FABP) family.</text>
</comment>
<accession>P31416</accession>
<feature type="chain" id="PRO_0000067360" description="Fatty acid-binding protein 1">
    <location>
        <begin position="1"/>
        <end position="132"/>
    </location>
</feature>
<feature type="binding site" evidence="2">
    <location>
        <position position="106"/>
    </location>
    <ligand>
        <name>a fatty acid</name>
        <dbReference type="ChEBI" id="CHEBI:28868"/>
    </ligand>
</feature>
<feature type="binding site" evidence="2">
    <location>
        <begin position="128"/>
        <end position="130"/>
    </location>
    <ligand>
        <name>a fatty acid</name>
        <dbReference type="ChEBI" id="CHEBI:28868"/>
    </ligand>
</feature>
<evidence type="ECO:0000250" key="1"/>
<evidence type="ECO:0000250" key="2">
    <source>
        <dbReference type="UniProtKB" id="Q02970"/>
    </source>
</evidence>
<evidence type="ECO:0000305" key="3"/>
<keyword id="KW-0963">Cytoplasm</keyword>
<keyword id="KW-0446">Lipid-binding</keyword>
<keyword id="KW-0813">Transport</keyword>
<name>FABP1_MANSE</name>
<sequence length="132" mass="14834">MAYLGKVYKFDREENFDGFLKSIGLSEEQVQKYLQYKPSSQLVKEGDKYKYISVSSDGTKETVFESGVETDDVVQGGLPIKTTYTVDGNTVTQVVNSAQGSATFKREYNGDELKVTITSSEWDGVAYRYYKA</sequence>
<dbReference type="EMBL" id="M77754">
    <property type="protein sequence ID" value="AAA29313.1"/>
    <property type="molecule type" value="mRNA"/>
</dbReference>
<dbReference type="PIR" id="A41749">
    <property type="entry name" value="A41749"/>
</dbReference>
<dbReference type="SMR" id="P31416"/>
<dbReference type="EnsemblMetazoa" id="XM_030168060.2">
    <property type="protein sequence ID" value="XP_030023920.1"/>
    <property type="gene ID" value="LOC115442871"/>
</dbReference>
<dbReference type="OrthoDB" id="354351at2759"/>
<dbReference type="GO" id="GO:0005737">
    <property type="term" value="C:cytoplasm"/>
    <property type="evidence" value="ECO:0007669"/>
    <property type="project" value="UniProtKB-SubCell"/>
</dbReference>
<dbReference type="GO" id="GO:0008289">
    <property type="term" value="F:lipid binding"/>
    <property type="evidence" value="ECO:0007669"/>
    <property type="project" value="UniProtKB-KW"/>
</dbReference>
<dbReference type="CDD" id="cd19448">
    <property type="entry name" value="FABP_pancrustacea"/>
    <property type="match status" value="1"/>
</dbReference>
<dbReference type="Gene3D" id="2.40.128.20">
    <property type="match status" value="1"/>
</dbReference>
<dbReference type="InterPro" id="IPR012674">
    <property type="entry name" value="Calycin"/>
</dbReference>
<dbReference type="InterPro" id="IPR000463">
    <property type="entry name" value="Fatty_acid-bd"/>
</dbReference>
<dbReference type="Pfam" id="PF14651">
    <property type="entry name" value="Lipocalin_7"/>
    <property type="match status" value="1"/>
</dbReference>
<dbReference type="SUPFAM" id="SSF50814">
    <property type="entry name" value="Lipocalins"/>
    <property type="match status" value="1"/>
</dbReference>
<dbReference type="PROSITE" id="PS00214">
    <property type="entry name" value="FABP"/>
    <property type="match status" value="1"/>
</dbReference>
<protein>
    <recommendedName>
        <fullName>Fatty acid-binding protein 1</fullName>
        <shortName>FABP 1</shortName>
    </recommendedName>
</protein>
<proteinExistence type="evidence at transcript level"/>
<reference key="1">
    <citation type="journal article" date="1992" name="J. Biol. Chem.">
        <title>Isolation, characterization, and cDNA sequence of two fatty acid-binding proteins from the midgut of Manduca sexta larvae.</title>
        <authorList>
            <person name="Smith A.F."/>
            <person name="Tsuchida K."/>
            <person name="Hanneman E."/>
            <person name="Suzuki T.C."/>
            <person name="Wells M.A."/>
        </authorList>
    </citation>
    <scope>NUCLEOTIDE SEQUENCE [MRNA]</scope>
    <source>
        <tissue>Midgut</tissue>
    </source>
</reference>
<gene>
    <name type="primary">MFB1</name>
</gene>